<accession>Q2T0U7</accession>
<name>SUCC_BURTA</name>
<reference key="1">
    <citation type="journal article" date="2005" name="BMC Genomics">
        <title>Bacterial genome adaptation to niches: divergence of the potential virulence genes in three Burkholderia species of different survival strategies.</title>
        <authorList>
            <person name="Kim H.S."/>
            <person name="Schell M.A."/>
            <person name="Yu Y."/>
            <person name="Ulrich R.L."/>
            <person name="Sarria S.H."/>
            <person name="Nierman W.C."/>
            <person name="DeShazer D."/>
        </authorList>
    </citation>
    <scope>NUCLEOTIDE SEQUENCE [LARGE SCALE GENOMIC DNA]</scope>
    <source>
        <strain>ATCC 700388 / DSM 13276 / CCUG 48851 / CIP 106301 / E264</strain>
    </source>
</reference>
<keyword id="KW-0067">ATP-binding</keyword>
<keyword id="KW-0436">Ligase</keyword>
<keyword id="KW-0460">Magnesium</keyword>
<keyword id="KW-0479">Metal-binding</keyword>
<keyword id="KW-0547">Nucleotide-binding</keyword>
<keyword id="KW-0816">Tricarboxylic acid cycle</keyword>
<dbReference type="EC" id="6.2.1.5" evidence="1"/>
<dbReference type="EMBL" id="CP000086">
    <property type="protein sequence ID" value="ABC38975.1"/>
    <property type="molecule type" value="Genomic_DNA"/>
</dbReference>
<dbReference type="RefSeq" id="WP_009892798.1">
    <property type="nucleotide sequence ID" value="NZ_CP008785.1"/>
</dbReference>
<dbReference type="SMR" id="Q2T0U7"/>
<dbReference type="KEGG" id="bte:BTH_I0646"/>
<dbReference type="HOGENOM" id="CLU_037430_0_2_4"/>
<dbReference type="UniPathway" id="UPA00223">
    <property type="reaction ID" value="UER00999"/>
</dbReference>
<dbReference type="Proteomes" id="UP000001930">
    <property type="component" value="Chromosome I"/>
</dbReference>
<dbReference type="GO" id="GO:0005829">
    <property type="term" value="C:cytosol"/>
    <property type="evidence" value="ECO:0007669"/>
    <property type="project" value="TreeGrafter"/>
</dbReference>
<dbReference type="GO" id="GO:0042709">
    <property type="term" value="C:succinate-CoA ligase complex"/>
    <property type="evidence" value="ECO:0007669"/>
    <property type="project" value="TreeGrafter"/>
</dbReference>
<dbReference type="GO" id="GO:0005524">
    <property type="term" value="F:ATP binding"/>
    <property type="evidence" value="ECO:0007669"/>
    <property type="project" value="UniProtKB-UniRule"/>
</dbReference>
<dbReference type="GO" id="GO:0000287">
    <property type="term" value="F:magnesium ion binding"/>
    <property type="evidence" value="ECO:0007669"/>
    <property type="project" value="UniProtKB-UniRule"/>
</dbReference>
<dbReference type="GO" id="GO:0004775">
    <property type="term" value="F:succinate-CoA ligase (ADP-forming) activity"/>
    <property type="evidence" value="ECO:0007669"/>
    <property type="project" value="UniProtKB-UniRule"/>
</dbReference>
<dbReference type="GO" id="GO:0004776">
    <property type="term" value="F:succinate-CoA ligase (GDP-forming) activity"/>
    <property type="evidence" value="ECO:0007669"/>
    <property type="project" value="RHEA"/>
</dbReference>
<dbReference type="GO" id="GO:0006104">
    <property type="term" value="P:succinyl-CoA metabolic process"/>
    <property type="evidence" value="ECO:0007669"/>
    <property type="project" value="TreeGrafter"/>
</dbReference>
<dbReference type="GO" id="GO:0006099">
    <property type="term" value="P:tricarboxylic acid cycle"/>
    <property type="evidence" value="ECO:0007669"/>
    <property type="project" value="UniProtKB-UniRule"/>
</dbReference>
<dbReference type="FunFam" id="3.30.1490.20:FF:000002">
    <property type="entry name" value="Succinate--CoA ligase [ADP-forming] subunit beta"/>
    <property type="match status" value="1"/>
</dbReference>
<dbReference type="FunFam" id="3.30.470.20:FF:000002">
    <property type="entry name" value="Succinate--CoA ligase [ADP-forming] subunit beta"/>
    <property type="match status" value="1"/>
</dbReference>
<dbReference type="FunFam" id="3.40.50.261:FF:000001">
    <property type="entry name" value="Succinate--CoA ligase [ADP-forming] subunit beta"/>
    <property type="match status" value="1"/>
</dbReference>
<dbReference type="Gene3D" id="3.30.1490.20">
    <property type="entry name" value="ATP-grasp fold, A domain"/>
    <property type="match status" value="1"/>
</dbReference>
<dbReference type="Gene3D" id="3.30.470.20">
    <property type="entry name" value="ATP-grasp fold, B domain"/>
    <property type="match status" value="1"/>
</dbReference>
<dbReference type="Gene3D" id="3.40.50.261">
    <property type="entry name" value="Succinyl-CoA synthetase domains"/>
    <property type="match status" value="1"/>
</dbReference>
<dbReference type="HAMAP" id="MF_00558">
    <property type="entry name" value="Succ_CoA_beta"/>
    <property type="match status" value="1"/>
</dbReference>
<dbReference type="InterPro" id="IPR011761">
    <property type="entry name" value="ATP-grasp"/>
</dbReference>
<dbReference type="InterPro" id="IPR013650">
    <property type="entry name" value="ATP-grasp_succ-CoA_synth-type"/>
</dbReference>
<dbReference type="InterPro" id="IPR013815">
    <property type="entry name" value="ATP_grasp_subdomain_1"/>
</dbReference>
<dbReference type="InterPro" id="IPR017866">
    <property type="entry name" value="Succ-CoA_synthase_bsu_CS"/>
</dbReference>
<dbReference type="InterPro" id="IPR005811">
    <property type="entry name" value="SUCC_ACL_C"/>
</dbReference>
<dbReference type="InterPro" id="IPR005809">
    <property type="entry name" value="Succ_CoA_ligase-like_bsu"/>
</dbReference>
<dbReference type="InterPro" id="IPR016102">
    <property type="entry name" value="Succinyl-CoA_synth-like"/>
</dbReference>
<dbReference type="NCBIfam" id="NF001913">
    <property type="entry name" value="PRK00696.1"/>
    <property type="match status" value="1"/>
</dbReference>
<dbReference type="NCBIfam" id="TIGR01016">
    <property type="entry name" value="sucCoAbeta"/>
    <property type="match status" value="1"/>
</dbReference>
<dbReference type="PANTHER" id="PTHR11815:SF10">
    <property type="entry name" value="SUCCINATE--COA LIGASE [GDP-FORMING] SUBUNIT BETA, MITOCHONDRIAL"/>
    <property type="match status" value="1"/>
</dbReference>
<dbReference type="PANTHER" id="PTHR11815">
    <property type="entry name" value="SUCCINYL-COA SYNTHETASE BETA CHAIN"/>
    <property type="match status" value="1"/>
</dbReference>
<dbReference type="Pfam" id="PF08442">
    <property type="entry name" value="ATP-grasp_2"/>
    <property type="match status" value="1"/>
</dbReference>
<dbReference type="Pfam" id="PF00549">
    <property type="entry name" value="Ligase_CoA"/>
    <property type="match status" value="1"/>
</dbReference>
<dbReference type="PIRSF" id="PIRSF001554">
    <property type="entry name" value="SucCS_beta"/>
    <property type="match status" value="1"/>
</dbReference>
<dbReference type="SUPFAM" id="SSF56059">
    <property type="entry name" value="Glutathione synthetase ATP-binding domain-like"/>
    <property type="match status" value="1"/>
</dbReference>
<dbReference type="SUPFAM" id="SSF52210">
    <property type="entry name" value="Succinyl-CoA synthetase domains"/>
    <property type="match status" value="1"/>
</dbReference>
<dbReference type="PROSITE" id="PS50975">
    <property type="entry name" value="ATP_GRASP"/>
    <property type="match status" value="1"/>
</dbReference>
<dbReference type="PROSITE" id="PS01217">
    <property type="entry name" value="SUCCINYL_COA_LIG_3"/>
    <property type="match status" value="1"/>
</dbReference>
<organism>
    <name type="scientific">Burkholderia thailandensis (strain ATCC 700388 / DSM 13276 / CCUG 48851 / CIP 106301 / E264)</name>
    <dbReference type="NCBI Taxonomy" id="271848"/>
    <lineage>
        <taxon>Bacteria</taxon>
        <taxon>Pseudomonadati</taxon>
        <taxon>Pseudomonadota</taxon>
        <taxon>Betaproteobacteria</taxon>
        <taxon>Burkholderiales</taxon>
        <taxon>Burkholderiaceae</taxon>
        <taxon>Burkholderia</taxon>
        <taxon>pseudomallei group</taxon>
    </lineage>
</organism>
<comment type="function">
    <text evidence="1">Succinyl-CoA synthetase functions in the citric acid cycle (TCA), coupling the hydrolysis of succinyl-CoA to the synthesis of either ATP or GTP and thus represents the only step of substrate-level phosphorylation in the TCA. The beta subunit provides nucleotide specificity of the enzyme and binds the substrate succinate, while the binding sites for coenzyme A and phosphate are found in the alpha subunit.</text>
</comment>
<comment type="catalytic activity">
    <reaction evidence="1">
        <text>succinate + ATP + CoA = succinyl-CoA + ADP + phosphate</text>
        <dbReference type="Rhea" id="RHEA:17661"/>
        <dbReference type="ChEBI" id="CHEBI:30031"/>
        <dbReference type="ChEBI" id="CHEBI:30616"/>
        <dbReference type="ChEBI" id="CHEBI:43474"/>
        <dbReference type="ChEBI" id="CHEBI:57287"/>
        <dbReference type="ChEBI" id="CHEBI:57292"/>
        <dbReference type="ChEBI" id="CHEBI:456216"/>
        <dbReference type="EC" id="6.2.1.5"/>
    </reaction>
    <physiologicalReaction direction="right-to-left" evidence="1">
        <dbReference type="Rhea" id="RHEA:17663"/>
    </physiologicalReaction>
</comment>
<comment type="catalytic activity">
    <reaction evidence="1">
        <text>GTP + succinate + CoA = succinyl-CoA + GDP + phosphate</text>
        <dbReference type="Rhea" id="RHEA:22120"/>
        <dbReference type="ChEBI" id="CHEBI:30031"/>
        <dbReference type="ChEBI" id="CHEBI:37565"/>
        <dbReference type="ChEBI" id="CHEBI:43474"/>
        <dbReference type="ChEBI" id="CHEBI:57287"/>
        <dbReference type="ChEBI" id="CHEBI:57292"/>
        <dbReference type="ChEBI" id="CHEBI:58189"/>
    </reaction>
    <physiologicalReaction direction="right-to-left" evidence="1">
        <dbReference type="Rhea" id="RHEA:22122"/>
    </physiologicalReaction>
</comment>
<comment type="cofactor">
    <cofactor evidence="1">
        <name>Mg(2+)</name>
        <dbReference type="ChEBI" id="CHEBI:18420"/>
    </cofactor>
    <text evidence="1">Binds 1 Mg(2+) ion per subunit.</text>
</comment>
<comment type="pathway">
    <text evidence="1">Carbohydrate metabolism; tricarboxylic acid cycle; succinate from succinyl-CoA (ligase route): step 1/1.</text>
</comment>
<comment type="subunit">
    <text evidence="1">Heterotetramer of two alpha and two beta subunits.</text>
</comment>
<comment type="similarity">
    <text evidence="1">Belongs to the succinate/malate CoA ligase beta subunit family.</text>
</comment>
<gene>
    <name evidence="1" type="primary">sucC</name>
    <name type="ordered locus">BTH_I0646</name>
</gene>
<proteinExistence type="inferred from homology"/>
<feature type="chain" id="PRO_1000082047" description="Succinate--CoA ligase [ADP-forming] subunit beta">
    <location>
        <begin position="1"/>
        <end position="388"/>
    </location>
</feature>
<feature type="domain" description="ATP-grasp" evidence="1">
    <location>
        <begin position="9"/>
        <end position="244"/>
    </location>
</feature>
<feature type="binding site" evidence="1">
    <location>
        <position position="46"/>
    </location>
    <ligand>
        <name>ATP</name>
        <dbReference type="ChEBI" id="CHEBI:30616"/>
    </ligand>
</feature>
<feature type="binding site" evidence="1">
    <location>
        <begin position="53"/>
        <end position="55"/>
    </location>
    <ligand>
        <name>ATP</name>
        <dbReference type="ChEBI" id="CHEBI:30616"/>
    </ligand>
</feature>
<feature type="binding site" evidence="1">
    <location>
        <position position="99"/>
    </location>
    <ligand>
        <name>ATP</name>
        <dbReference type="ChEBI" id="CHEBI:30616"/>
    </ligand>
</feature>
<feature type="binding site" evidence="1">
    <location>
        <position position="102"/>
    </location>
    <ligand>
        <name>ATP</name>
        <dbReference type="ChEBI" id="CHEBI:30616"/>
    </ligand>
</feature>
<feature type="binding site" evidence="1">
    <location>
        <position position="107"/>
    </location>
    <ligand>
        <name>ATP</name>
        <dbReference type="ChEBI" id="CHEBI:30616"/>
    </ligand>
</feature>
<feature type="binding site" evidence="1">
    <location>
        <position position="199"/>
    </location>
    <ligand>
        <name>Mg(2+)</name>
        <dbReference type="ChEBI" id="CHEBI:18420"/>
    </ligand>
</feature>
<feature type="binding site" evidence="1">
    <location>
        <position position="213"/>
    </location>
    <ligand>
        <name>Mg(2+)</name>
        <dbReference type="ChEBI" id="CHEBI:18420"/>
    </ligand>
</feature>
<feature type="binding site" evidence="1">
    <location>
        <position position="264"/>
    </location>
    <ligand>
        <name>substrate</name>
        <note>ligand shared with subunit alpha</note>
    </ligand>
</feature>
<feature type="binding site" evidence="1">
    <location>
        <begin position="321"/>
        <end position="323"/>
    </location>
    <ligand>
        <name>substrate</name>
        <note>ligand shared with subunit alpha</note>
    </ligand>
</feature>
<evidence type="ECO:0000255" key="1">
    <source>
        <dbReference type="HAMAP-Rule" id="MF_00558"/>
    </source>
</evidence>
<protein>
    <recommendedName>
        <fullName evidence="1">Succinate--CoA ligase [ADP-forming] subunit beta</fullName>
        <ecNumber evidence="1">6.2.1.5</ecNumber>
    </recommendedName>
    <alternativeName>
        <fullName evidence="1">Succinyl-CoA synthetase subunit beta</fullName>
        <shortName evidence="1">SCS-beta</shortName>
    </alternativeName>
</protein>
<sequence length="388" mass="41259">MKIHEYQGKEILRKFGVAVPRGKPAFSVDEAVKVAEELGGPVWVVKAQIHAGGRGKGGGVKVAKSLDQVREYANQILGMQLKTHQTGPEGQKVNRLLIEEGADIKKELYVGIVIDRVSQKVVVMASSEGGMDIEEVAEKTPEAIHKVAVEPSTGLQDAEADDLAKKIGVPDASIPQAREILKGLYKSFWETDASLAEINPLVLTGDGKVIALDAKFNFDSNALFRHPEIVAYRDLDEEDPAEIEASKFDLAYISLDGNIGCLVNGAGLAMATMDTIKLFGGEPANFLDVGGGATTEKVTEAFKLMLKNPGLKAILVNIFGGIMRCDVIAEGVIAGSKAVNLNVPLVVRMKGTNEDLGKKMLAESGLPIISADSMEEAAQKVVAAAAGK</sequence>